<sequence length="240" mass="26629">MIAFIVLPILAAVLQQSSGSVDFDSESPRKPEIQNKIVDLHNSLRRSVNPTASNMLKMEWYPEAADNAERWAYRCIDSHSPRDSRVLGGIKCGENIYISPVPIKWTEIIHAWHGENKNFKYGIGADPPNAVTGHFTQIVWYKSYHVGCAAAYCPSSEYSYFYVCQYCPAGNIRGKTATPYKSGPPCGDCPSACDNGLCTNPCTKEDKYSNCKSLVQQAGCQDKQMQSDCSAICFCQNKII</sequence>
<comment type="function">
    <text evidence="1">Weakly blocks contraction of smooth muscle elicited by high potassium-induced depolarization, but does not block caffeine-stimulated contraction. May target voltage-gated calcium channels on smooth muscle (By similarity).</text>
</comment>
<comment type="subcellular location">
    <subcellularLocation>
        <location>Secreted</location>
    </subcellularLocation>
</comment>
<comment type="tissue specificity">
    <text>Expressed by the venom gland.</text>
</comment>
<comment type="similarity">
    <text evidence="4">Belongs to the CRISP family.</text>
</comment>
<name>CRVP_CROAD</name>
<dbReference type="EMBL" id="HQ414088">
    <property type="protein sequence ID" value="AEJ31966.1"/>
    <property type="molecule type" value="mRNA"/>
</dbReference>
<dbReference type="EMBL" id="JU173623">
    <property type="protein sequence ID" value="AFJ49149.1"/>
    <property type="molecule type" value="mRNA"/>
</dbReference>
<dbReference type="SMR" id="F8S0Y4"/>
<dbReference type="GO" id="GO:0005576">
    <property type="term" value="C:extracellular region"/>
    <property type="evidence" value="ECO:0007669"/>
    <property type="project" value="UniProtKB-SubCell"/>
</dbReference>
<dbReference type="GO" id="GO:0005246">
    <property type="term" value="F:calcium channel regulator activity"/>
    <property type="evidence" value="ECO:0007669"/>
    <property type="project" value="UniProtKB-KW"/>
</dbReference>
<dbReference type="GO" id="GO:0090729">
    <property type="term" value="F:toxin activity"/>
    <property type="evidence" value="ECO:0007669"/>
    <property type="project" value="UniProtKB-KW"/>
</dbReference>
<dbReference type="CDD" id="cd05383">
    <property type="entry name" value="CAP_CRISP"/>
    <property type="match status" value="1"/>
</dbReference>
<dbReference type="FunFam" id="1.10.10.740:FF:000001">
    <property type="entry name" value="Cysteine-rich secretory protein 2"/>
    <property type="match status" value="1"/>
</dbReference>
<dbReference type="FunFam" id="3.40.33.10:FF:000005">
    <property type="entry name" value="Cysteine-rich secretory protein 2"/>
    <property type="match status" value="1"/>
</dbReference>
<dbReference type="Gene3D" id="3.40.33.10">
    <property type="entry name" value="CAP"/>
    <property type="match status" value="1"/>
</dbReference>
<dbReference type="Gene3D" id="1.10.10.740">
    <property type="entry name" value="Crisp domain"/>
    <property type="match status" value="1"/>
</dbReference>
<dbReference type="InterPro" id="IPR018244">
    <property type="entry name" value="Allrgn_V5/Tpx1_CS"/>
</dbReference>
<dbReference type="InterPro" id="IPR014044">
    <property type="entry name" value="CAP_dom"/>
</dbReference>
<dbReference type="InterPro" id="IPR035940">
    <property type="entry name" value="CAP_sf"/>
</dbReference>
<dbReference type="InterPro" id="IPR042076">
    <property type="entry name" value="Crisp-like_dom"/>
</dbReference>
<dbReference type="InterPro" id="IPR001283">
    <property type="entry name" value="CRISP-related"/>
</dbReference>
<dbReference type="InterPro" id="IPR013871">
    <property type="entry name" value="Cysteine_rich_secretory"/>
</dbReference>
<dbReference type="InterPro" id="IPR034117">
    <property type="entry name" value="SCP_CRISP"/>
</dbReference>
<dbReference type="InterPro" id="IPR003582">
    <property type="entry name" value="ShKT_dom"/>
</dbReference>
<dbReference type="InterPro" id="IPR002413">
    <property type="entry name" value="V5_allergen-like"/>
</dbReference>
<dbReference type="PANTHER" id="PTHR10334">
    <property type="entry name" value="CYSTEINE-RICH SECRETORY PROTEIN-RELATED"/>
    <property type="match status" value="1"/>
</dbReference>
<dbReference type="Pfam" id="PF00188">
    <property type="entry name" value="CAP"/>
    <property type="match status" value="1"/>
</dbReference>
<dbReference type="Pfam" id="PF08562">
    <property type="entry name" value="Crisp"/>
    <property type="match status" value="1"/>
</dbReference>
<dbReference type="PRINTS" id="PR00838">
    <property type="entry name" value="V5ALLERGEN"/>
</dbReference>
<dbReference type="PRINTS" id="PR00837">
    <property type="entry name" value="V5TPXLIKE"/>
</dbReference>
<dbReference type="SMART" id="SM00198">
    <property type="entry name" value="SCP"/>
    <property type="match status" value="1"/>
</dbReference>
<dbReference type="SUPFAM" id="SSF57546">
    <property type="entry name" value="Crisp domain-like"/>
    <property type="match status" value="1"/>
</dbReference>
<dbReference type="SUPFAM" id="SSF55797">
    <property type="entry name" value="PR-1-like"/>
    <property type="match status" value="1"/>
</dbReference>
<dbReference type="PROSITE" id="PS01009">
    <property type="entry name" value="CRISP_1"/>
    <property type="match status" value="1"/>
</dbReference>
<dbReference type="PROSITE" id="PS01010">
    <property type="entry name" value="CRISP_2"/>
    <property type="match status" value="1"/>
</dbReference>
<dbReference type="PROSITE" id="PS51670">
    <property type="entry name" value="SHKT"/>
    <property type="match status" value="1"/>
</dbReference>
<protein>
    <recommendedName>
        <fullName>Cysteine-rich secretory protein</fullName>
        <shortName>CRVP</shortName>
    </recommendedName>
</protein>
<evidence type="ECO:0000250" key="1"/>
<evidence type="ECO:0000255" key="2">
    <source>
        <dbReference type="PROSITE-ProRule" id="PRU01005"/>
    </source>
</evidence>
<evidence type="ECO:0000269" key="3">
    <source>
    </source>
</evidence>
<evidence type="ECO:0000305" key="4"/>
<reference key="1">
    <citation type="journal article" date="2011" name="Toxicon">
        <title>A high-throughput venom-gland transcriptome for the eastern diamondback rattlesnake (Crotalus adamanteus) and evidence for pervasive positive selection across toxin classes.</title>
        <authorList>
            <person name="Rokyta D.R."/>
            <person name="Wray K.P."/>
            <person name="Lemmon A.R."/>
            <person name="Lemmon E.M."/>
            <person name="Caudle S.B."/>
        </authorList>
    </citation>
    <scope>NUCLEOTIDE SEQUENCE [MRNA]</scope>
    <source>
        <tissue>Venom gland</tissue>
    </source>
</reference>
<reference key="2">
    <citation type="journal article" date="2012" name="BMC Genomics">
        <title>The venom-gland transcriptome of the eastern diamondback rattlesnake (Crotalus adamanteus).</title>
        <authorList>
            <person name="Rokyta D.R."/>
            <person name="Lemmon A.R."/>
            <person name="Margres M.J."/>
            <person name="Aronow K."/>
        </authorList>
    </citation>
    <scope>NUCLEOTIDE SEQUENCE [MRNA]</scope>
    <source>
        <tissue>Venom gland</tissue>
    </source>
</reference>
<reference key="3">
    <citation type="journal article" date="2014" name="J. Proteomics">
        <title>Linking the transcriptome and proteome to characterize the venom of the eastern diamondback rattlesnake (Crotalus adamanteus).</title>
        <authorList>
            <person name="Margres M.J."/>
            <person name="McGivern J.J."/>
            <person name="Wray K.P."/>
            <person name="Seavy M."/>
            <person name="Calvin K."/>
            <person name="Rokyta D.R."/>
        </authorList>
    </citation>
    <scope>PROTEIN SEQUENCE OF 20-34</scope>
    <scope>IDENTIFICATION BY MASS SPECTROMETRY</scope>
    <source>
        <tissue>Venom</tissue>
    </source>
</reference>
<keyword id="KW-0108">Calcium channel impairing toxin</keyword>
<keyword id="KW-0903">Direct protein sequencing</keyword>
<keyword id="KW-1015">Disulfide bond</keyword>
<keyword id="KW-0872">Ion channel impairing toxin</keyword>
<keyword id="KW-0528">Neurotoxin</keyword>
<keyword id="KW-0964">Secreted</keyword>
<keyword id="KW-0732">Signal</keyword>
<keyword id="KW-0800">Toxin</keyword>
<proteinExistence type="evidence at protein level"/>
<accession>F8S0Y4</accession>
<feature type="signal peptide" evidence="3">
    <location>
        <begin position="1"/>
        <end position="19"/>
    </location>
</feature>
<feature type="chain" id="PRO_5000771356" description="Cysteine-rich secretory protein">
    <location>
        <begin position="20"/>
        <end position="240"/>
    </location>
</feature>
<feature type="domain" description="SCP">
    <location>
        <begin position="38"/>
        <end position="166"/>
    </location>
</feature>
<feature type="domain" description="ShKT" evidence="2">
    <location>
        <begin position="202"/>
        <end position="235"/>
    </location>
</feature>
<feature type="disulfide bond" evidence="2">
    <location>
        <begin position="75"/>
        <end position="153"/>
    </location>
</feature>
<feature type="disulfide bond" evidence="2">
    <location>
        <begin position="92"/>
        <end position="167"/>
    </location>
</feature>
<feature type="disulfide bond" evidence="2">
    <location>
        <begin position="148"/>
        <end position="164"/>
    </location>
</feature>
<feature type="disulfide bond" evidence="2">
    <location>
        <begin position="186"/>
        <end position="193"/>
    </location>
</feature>
<feature type="disulfide bond" evidence="2">
    <location>
        <begin position="189"/>
        <end position="198"/>
    </location>
</feature>
<feature type="disulfide bond" evidence="2">
    <location>
        <begin position="202"/>
        <end position="235"/>
    </location>
</feature>
<feature type="disulfide bond" evidence="2">
    <location>
        <begin position="211"/>
        <end position="229"/>
    </location>
</feature>
<feature type="disulfide bond" evidence="2">
    <location>
        <begin position="220"/>
        <end position="233"/>
    </location>
</feature>
<organism>
    <name type="scientific">Crotalus adamanteus</name>
    <name type="common">Eastern diamondback rattlesnake</name>
    <dbReference type="NCBI Taxonomy" id="8729"/>
    <lineage>
        <taxon>Eukaryota</taxon>
        <taxon>Metazoa</taxon>
        <taxon>Chordata</taxon>
        <taxon>Craniata</taxon>
        <taxon>Vertebrata</taxon>
        <taxon>Euteleostomi</taxon>
        <taxon>Lepidosauria</taxon>
        <taxon>Squamata</taxon>
        <taxon>Bifurcata</taxon>
        <taxon>Unidentata</taxon>
        <taxon>Episquamata</taxon>
        <taxon>Toxicofera</taxon>
        <taxon>Serpentes</taxon>
        <taxon>Colubroidea</taxon>
        <taxon>Viperidae</taxon>
        <taxon>Crotalinae</taxon>
        <taxon>Crotalus</taxon>
    </lineage>
</organism>